<comment type="function">
    <text evidence="1 7">Transcriptional activator of the dopamine transporter (DAT), binding it's promoter at the consensus sequence 5'-CCTGCACAGTTCACGGA-3'. Binds to 5'-d(GCC)(n)-3' trinucleotide repeats in promoter regions and acts as a repressor of the FMR1 gene (By similarity). Transcriptional repressor of MYC and thymidine kinase promoters.</text>
</comment>
<comment type="subunit">
    <text evidence="1">Interacts with ZBTB21.</text>
</comment>
<comment type="subcellular location">
    <subcellularLocation>
        <location evidence="1">Nucleus</location>
    </subcellularLocation>
</comment>
<comment type="tissue specificity">
    <text evidence="7">Ubiquitous.</text>
</comment>
<comment type="domain">
    <text evidence="1">The BTB/POZ domain seems to direct the protein to discrete regions in the nucleus.</text>
</comment>
<comment type="similarity">
    <text evidence="8">Belongs to the krueppel C2H2-type zinc-finger protein family.</text>
</comment>
<evidence type="ECO:0000250" key="1"/>
<evidence type="ECO:0000250" key="2">
    <source>
        <dbReference type="UniProtKB" id="O43829"/>
    </source>
</evidence>
<evidence type="ECO:0000255" key="3"/>
<evidence type="ECO:0000255" key="4">
    <source>
        <dbReference type="PROSITE-ProRule" id="PRU00037"/>
    </source>
</evidence>
<evidence type="ECO:0000255" key="5">
    <source>
        <dbReference type="PROSITE-ProRule" id="PRU00042"/>
    </source>
</evidence>
<evidence type="ECO:0000256" key="6">
    <source>
        <dbReference type="SAM" id="MobiDB-lite"/>
    </source>
</evidence>
<evidence type="ECO:0000269" key="7">
    <source>
    </source>
</evidence>
<evidence type="ECO:0000305" key="8"/>
<gene>
    <name type="primary">Zbtb14</name>
    <name type="synonym">Zfp-5</name>
    <name type="synonym">Zfp161</name>
    <name type="synonym">Zfp5</name>
</gene>
<sequence length="449" mass="50899">MEFFISMSETIKYNDDDHKTLFLKTLNEQRLEGEFCDIAIVVEDVKFRAHRCVLAACSTYFKKLFKKLEVDSSSVIEIDFLRSDIFEEVLNYMYTAKISVKKEDVNLMMSSGQILGIRFLDKLCSQKRDVSSPDESNGQSKSKYCLKLNRPIGDAADAQDDDVEEIGDQDDSPSDDTVEGTPPSQEDGKSPTTTLRVQEAILKELGSEEVRKVNCYGQEVESMETPESKDLGSQTPQALTFNDGMSEVKDEQTPGWTTAASDMKFEYLLYGHHREQIACQACGKTFSDEGRLRKHEKLHTADRPFVCEMCTKGFTTQAHLKEHLKIHTGYKPYSCEVCGKSFIRAPDLKKHERVHSNERPFACHMCDKAFKHKSHLKDHERRHRGEKPFVCGSCTKAFAKASDLKRHENNMHSERKQVTPSAIQSETEQLQAAAMAAEAEQQLETIACS</sequence>
<feature type="chain" id="PRO_0000047318" description="Zinc finger and BTB domain-containing protein 14">
    <location>
        <begin position="1"/>
        <end position="449"/>
    </location>
</feature>
<feature type="domain" description="BTB" evidence="4">
    <location>
        <begin position="36"/>
        <end position="102"/>
    </location>
</feature>
<feature type="zinc finger region" description="C2H2-type 1" evidence="5">
    <location>
        <begin position="277"/>
        <end position="304"/>
    </location>
</feature>
<feature type="zinc finger region" description="C2H2-type 2" evidence="5">
    <location>
        <begin position="305"/>
        <end position="332"/>
    </location>
</feature>
<feature type="zinc finger region" description="C2H2-type 3" evidence="5">
    <location>
        <begin position="333"/>
        <end position="360"/>
    </location>
</feature>
<feature type="zinc finger region" description="C2H2-type 4" evidence="5">
    <location>
        <begin position="361"/>
        <end position="388"/>
    </location>
</feature>
<feature type="zinc finger region" description="C2H2-type 5" evidence="5">
    <location>
        <begin position="389"/>
        <end position="417"/>
    </location>
</feature>
<feature type="region of interest" description="Disordered" evidence="6">
    <location>
        <begin position="156"/>
        <end position="194"/>
    </location>
</feature>
<feature type="region of interest" description="Disordered" evidence="6">
    <location>
        <begin position="405"/>
        <end position="424"/>
    </location>
</feature>
<feature type="short sequence motif" description="Nuclear localization signal" evidence="3">
    <location>
        <begin position="50"/>
        <end position="66"/>
    </location>
</feature>
<feature type="compositionally biased region" description="Acidic residues" evidence="6">
    <location>
        <begin position="157"/>
        <end position="178"/>
    </location>
</feature>
<feature type="compositionally biased region" description="Basic and acidic residues" evidence="6">
    <location>
        <begin position="405"/>
        <end position="417"/>
    </location>
</feature>
<feature type="cross-link" description="Glycyl lysine isopeptide (Lys-Gly) (interchain with G-Cter in SUMO2)" evidence="2">
    <location>
        <position position="46"/>
    </location>
</feature>
<feature type="cross-link" description="Glycyl lysine isopeptide (Lys-Gly) (interchain with G-Cter in SUMO2)" evidence="2">
    <location>
        <position position="203"/>
    </location>
</feature>
<feature type="cross-link" description="Glycyl lysine isopeptide (Lys-Gly) (interchain with G-Cter in SUMO2)" evidence="2">
    <location>
        <position position="249"/>
    </location>
</feature>
<accession>Q08376</accession>
<dbReference type="EMBL" id="L15325">
    <property type="protein sequence ID" value="AAA02940.1"/>
    <property type="molecule type" value="mRNA"/>
</dbReference>
<dbReference type="EMBL" id="BC052017">
    <property type="protein sequence ID" value="AAH52017.1"/>
    <property type="molecule type" value="mRNA"/>
</dbReference>
<dbReference type="CCDS" id="CCDS37682.1"/>
<dbReference type="PIR" id="S41647">
    <property type="entry name" value="S41647"/>
</dbReference>
<dbReference type="RefSeq" id="NP_001343211.1">
    <property type="nucleotide sequence ID" value="NM_001356282.1"/>
</dbReference>
<dbReference type="RefSeq" id="NP_001343212.1">
    <property type="nucleotide sequence ID" value="NM_001356283.1"/>
</dbReference>
<dbReference type="RefSeq" id="NP_033573.1">
    <property type="nucleotide sequence ID" value="NM_009547.3"/>
</dbReference>
<dbReference type="RefSeq" id="XP_006524275.1">
    <property type="nucleotide sequence ID" value="XM_006524212.2"/>
</dbReference>
<dbReference type="RefSeq" id="XP_011244726.1">
    <property type="nucleotide sequence ID" value="XM_011246424.2"/>
</dbReference>
<dbReference type="SMR" id="Q08376"/>
<dbReference type="BioGRID" id="204642">
    <property type="interactions" value="25"/>
</dbReference>
<dbReference type="FunCoup" id="Q08376">
    <property type="interactions" value="4304"/>
</dbReference>
<dbReference type="STRING" id="10090.ENSMUSP00000108296"/>
<dbReference type="iPTMnet" id="Q08376"/>
<dbReference type="PhosphoSitePlus" id="Q08376"/>
<dbReference type="jPOST" id="Q08376"/>
<dbReference type="PaxDb" id="10090-ENSMUSP00000108296"/>
<dbReference type="PeptideAtlas" id="Q08376"/>
<dbReference type="ProteomicsDB" id="275121"/>
<dbReference type="Antibodypedia" id="21919">
    <property type="antibodies" value="60 antibodies from 18 providers"/>
</dbReference>
<dbReference type="DNASU" id="22666"/>
<dbReference type="Ensembl" id="ENSMUST00000062369.14">
    <property type="protein sequence ID" value="ENSMUSP00000054897.8"/>
    <property type="gene ID" value="ENSMUSG00000049672.16"/>
</dbReference>
<dbReference type="Ensembl" id="ENSMUST00000112674.8">
    <property type="protein sequence ID" value="ENSMUSP00000108294.2"/>
    <property type="gene ID" value="ENSMUSG00000049672.16"/>
</dbReference>
<dbReference type="Ensembl" id="ENSMUST00000112676.4">
    <property type="protein sequence ID" value="ENSMUSP00000108296.3"/>
    <property type="gene ID" value="ENSMUSG00000049672.16"/>
</dbReference>
<dbReference type="GeneID" id="22666"/>
<dbReference type="KEGG" id="mmu:22666"/>
<dbReference type="UCSC" id="uc008dkt.1">
    <property type="organism name" value="mouse"/>
</dbReference>
<dbReference type="AGR" id="MGI:1195345"/>
<dbReference type="CTD" id="7541"/>
<dbReference type="MGI" id="MGI:1195345">
    <property type="gene designation" value="Zbtb14"/>
</dbReference>
<dbReference type="VEuPathDB" id="HostDB:ENSMUSG00000049672"/>
<dbReference type="eggNOG" id="KOG1721">
    <property type="taxonomic scope" value="Eukaryota"/>
</dbReference>
<dbReference type="GeneTree" id="ENSGT00940000158052"/>
<dbReference type="HOGENOM" id="CLU_697455_0_0_1"/>
<dbReference type="InParanoid" id="Q08376"/>
<dbReference type="OMA" id="CIGCDYK"/>
<dbReference type="OrthoDB" id="6425912at2759"/>
<dbReference type="PhylomeDB" id="Q08376"/>
<dbReference type="TreeFam" id="TF333100"/>
<dbReference type="BioGRID-ORCS" id="22666">
    <property type="hits" value="8 hits in 78 CRISPR screens"/>
</dbReference>
<dbReference type="ChiTaRS" id="Zbtb14">
    <property type="organism name" value="mouse"/>
</dbReference>
<dbReference type="PRO" id="PR:Q08376"/>
<dbReference type="Proteomes" id="UP000000589">
    <property type="component" value="Chromosome 17"/>
</dbReference>
<dbReference type="RNAct" id="Q08376">
    <property type="molecule type" value="protein"/>
</dbReference>
<dbReference type="Bgee" id="ENSMUSG00000049672">
    <property type="expression patterns" value="Expressed in floor plate of midbrain and 256 other cell types or tissues"/>
</dbReference>
<dbReference type="ExpressionAtlas" id="Q08376">
    <property type="expression patterns" value="baseline and differential"/>
</dbReference>
<dbReference type="GO" id="GO:0016235">
    <property type="term" value="C:aggresome"/>
    <property type="evidence" value="ECO:0007669"/>
    <property type="project" value="Ensembl"/>
</dbReference>
<dbReference type="GO" id="GO:0005829">
    <property type="term" value="C:cytosol"/>
    <property type="evidence" value="ECO:0007669"/>
    <property type="project" value="Ensembl"/>
</dbReference>
<dbReference type="GO" id="GO:0005730">
    <property type="term" value="C:nucleolus"/>
    <property type="evidence" value="ECO:0007669"/>
    <property type="project" value="Ensembl"/>
</dbReference>
<dbReference type="GO" id="GO:0005654">
    <property type="term" value="C:nucleoplasm"/>
    <property type="evidence" value="ECO:0007669"/>
    <property type="project" value="Ensembl"/>
</dbReference>
<dbReference type="GO" id="GO:0005634">
    <property type="term" value="C:nucleus"/>
    <property type="evidence" value="ECO:0000250"/>
    <property type="project" value="UniProtKB"/>
</dbReference>
<dbReference type="GO" id="GO:0003700">
    <property type="term" value="F:DNA-binding transcription factor activity"/>
    <property type="evidence" value="ECO:0000250"/>
    <property type="project" value="UniProtKB"/>
</dbReference>
<dbReference type="GO" id="GO:0001227">
    <property type="term" value="F:DNA-binding transcription repressor activity, RNA polymerase II-specific"/>
    <property type="evidence" value="ECO:0000314"/>
    <property type="project" value="NTNU_SB"/>
</dbReference>
<dbReference type="GO" id="GO:0000978">
    <property type="term" value="F:RNA polymerase II cis-regulatory region sequence-specific DNA binding"/>
    <property type="evidence" value="ECO:0000314"/>
    <property type="project" value="NTNU_SB"/>
</dbReference>
<dbReference type="GO" id="GO:0043565">
    <property type="term" value="F:sequence-specific DNA binding"/>
    <property type="evidence" value="ECO:0000250"/>
    <property type="project" value="UniProtKB"/>
</dbReference>
<dbReference type="GO" id="GO:0000976">
    <property type="term" value="F:transcription cis-regulatory region binding"/>
    <property type="evidence" value="ECO:0000250"/>
    <property type="project" value="UniProtKB"/>
</dbReference>
<dbReference type="GO" id="GO:0008270">
    <property type="term" value="F:zinc ion binding"/>
    <property type="evidence" value="ECO:0007669"/>
    <property type="project" value="UniProtKB-KW"/>
</dbReference>
<dbReference type="GO" id="GO:0003279">
    <property type="term" value="P:cardiac septum development"/>
    <property type="evidence" value="ECO:0000315"/>
    <property type="project" value="MGI"/>
</dbReference>
<dbReference type="GO" id="GO:0060976">
    <property type="term" value="P:coronary vasculature development"/>
    <property type="evidence" value="ECO:0000315"/>
    <property type="project" value="MGI"/>
</dbReference>
<dbReference type="GO" id="GO:0003170">
    <property type="term" value="P:heart valve development"/>
    <property type="evidence" value="ECO:0000315"/>
    <property type="project" value="MGI"/>
</dbReference>
<dbReference type="GO" id="GO:0001822">
    <property type="term" value="P:kidney development"/>
    <property type="evidence" value="ECO:0000315"/>
    <property type="project" value="MGI"/>
</dbReference>
<dbReference type="GO" id="GO:0045892">
    <property type="term" value="P:negative regulation of DNA-templated transcription"/>
    <property type="evidence" value="ECO:0000250"/>
    <property type="project" value="UniProtKB"/>
</dbReference>
<dbReference type="GO" id="GO:0000122">
    <property type="term" value="P:negative regulation of transcription by RNA polymerase II"/>
    <property type="evidence" value="ECO:0000314"/>
    <property type="project" value="NTNU_SB"/>
</dbReference>
<dbReference type="CDD" id="cd18204">
    <property type="entry name" value="BTB_POZ_ZBTB14"/>
    <property type="match status" value="1"/>
</dbReference>
<dbReference type="FunFam" id="3.30.160.60:FF:000147">
    <property type="entry name" value="POZ-, AT hook-, and zinc finger-containing protein 1"/>
    <property type="match status" value="1"/>
</dbReference>
<dbReference type="FunFam" id="3.30.160.60:FF:000316">
    <property type="entry name" value="Zinc finger and BTB domain-containing 14"/>
    <property type="match status" value="1"/>
</dbReference>
<dbReference type="FunFam" id="3.30.160.60:FF:000762">
    <property type="entry name" value="Zinc finger and BTB domain-containing 14"/>
    <property type="match status" value="1"/>
</dbReference>
<dbReference type="FunFam" id="3.30.160.60:FF:000766">
    <property type="entry name" value="Zinc finger and BTB domain-containing 14"/>
    <property type="match status" value="1"/>
</dbReference>
<dbReference type="FunFam" id="3.30.710.10:FF:000054">
    <property type="entry name" value="Zinc finger and BTB domain-containing protein 14"/>
    <property type="match status" value="1"/>
</dbReference>
<dbReference type="FunFam" id="3.30.160.60:FF:000145">
    <property type="entry name" value="Zinc finger protein 574"/>
    <property type="match status" value="1"/>
</dbReference>
<dbReference type="Gene3D" id="3.30.160.60">
    <property type="entry name" value="Classic Zinc Finger"/>
    <property type="match status" value="5"/>
</dbReference>
<dbReference type="Gene3D" id="3.30.710.10">
    <property type="entry name" value="Potassium Channel Kv1.1, Chain A"/>
    <property type="match status" value="1"/>
</dbReference>
<dbReference type="InterPro" id="IPR000210">
    <property type="entry name" value="BTB/POZ_dom"/>
</dbReference>
<dbReference type="InterPro" id="IPR011333">
    <property type="entry name" value="SKP1/BTB/POZ_sf"/>
</dbReference>
<dbReference type="InterPro" id="IPR036236">
    <property type="entry name" value="Znf_C2H2_sf"/>
</dbReference>
<dbReference type="InterPro" id="IPR013087">
    <property type="entry name" value="Znf_C2H2_type"/>
</dbReference>
<dbReference type="InterPro" id="IPR050457">
    <property type="entry name" value="ZnFinger_BTB_dom_contain"/>
</dbReference>
<dbReference type="PANTHER" id="PTHR46105">
    <property type="entry name" value="AGAP004733-PA"/>
    <property type="match status" value="1"/>
</dbReference>
<dbReference type="PANTHER" id="PTHR46105:SF5">
    <property type="entry name" value="ZINC FINGER AND BTB DOMAIN-CONTAINING PROTEIN 44 ISOFORM X1"/>
    <property type="match status" value="1"/>
</dbReference>
<dbReference type="Pfam" id="PF00651">
    <property type="entry name" value="BTB"/>
    <property type="match status" value="1"/>
</dbReference>
<dbReference type="Pfam" id="PF00096">
    <property type="entry name" value="zf-C2H2"/>
    <property type="match status" value="5"/>
</dbReference>
<dbReference type="SMART" id="SM00225">
    <property type="entry name" value="BTB"/>
    <property type="match status" value="1"/>
</dbReference>
<dbReference type="SMART" id="SM00355">
    <property type="entry name" value="ZnF_C2H2"/>
    <property type="match status" value="5"/>
</dbReference>
<dbReference type="SUPFAM" id="SSF57667">
    <property type="entry name" value="beta-beta-alpha zinc fingers"/>
    <property type="match status" value="3"/>
</dbReference>
<dbReference type="SUPFAM" id="SSF54695">
    <property type="entry name" value="POZ domain"/>
    <property type="match status" value="1"/>
</dbReference>
<dbReference type="PROSITE" id="PS50097">
    <property type="entry name" value="BTB"/>
    <property type="match status" value="1"/>
</dbReference>
<dbReference type="PROSITE" id="PS00028">
    <property type="entry name" value="ZINC_FINGER_C2H2_1"/>
    <property type="match status" value="5"/>
</dbReference>
<dbReference type="PROSITE" id="PS50157">
    <property type="entry name" value="ZINC_FINGER_C2H2_2"/>
    <property type="match status" value="5"/>
</dbReference>
<organism>
    <name type="scientific">Mus musculus</name>
    <name type="common">Mouse</name>
    <dbReference type="NCBI Taxonomy" id="10090"/>
    <lineage>
        <taxon>Eukaryota</taxon>
        <taxon>Metazoa</taxon>
        <taxon>Chordata</taxon>
        <taxon>Craniata</taxon>
        <taxon>Vertebrata</taxon>
        <taxon>Euteleostomi</taxon>
        <taxon>Mammalia</taxon>
        <taxon>Eutheria</taxon>
        <taxon>Euarchontoglires</taxon>
        <taxon>Glires</taxon>
        <taxon>Rodentia</taxon>
        <taxon>Myomorpha</taxon>
        <taxon>Muroidea</taxon>
        <taxon>Muridae</taxon>
        <taxon>Murinae</taxon>
        <taxon>Mus</taxon>
        <taxon>Mus</taxon>
    </lineage>
</organism>
<proteinExistence type="evidence at transcript level"/>
<keyword id="KW-0238">DNA-binding</keyword>
<keyword id="KW-1017">Isopeptide bond</keyword>
<keyword id="KW-0479">Metal-binding</keyword>
<keyword id="KW-0539">Nucleus</keyword>
<keyword id="KW-1185">Reference proteome</keyword>
<keyword id="KW-0677">Repeat</keyword>
<keyword id="KW-0678">Repressor</keyword>
<keyword id="KW-0804">Transcription</keyword>
<keyword id="KW-0805">Transcription regulation</keyword>
<keyword id="KW-0832">Ubl conjugation</keyword>
<keyword id="KW-0862">Zinc</keyword>
<keyword id="KW-0863">Zinc-finger</keyword>
<name>ZBT14_MOUSE</name>
<reference key="1">
    <citation type="journal article" date="1993" name="Nucleic Acids Res.">
        <title>Transcriptional repressor ZF5 identifies a new conserved domain in zinc finger proteins.</title>
        <authorList>
            <person name="Numoto M."/>
            <person name="Niwa O."/>
            <person name="Kaplan J."/>
            <person name="Wong K.-K."/>
            <person name="Merrell K."/>
            <person name="Kamiya K."/>
            <person name="Yanagihara K."/>
            <person name="Calame K."/>
        </authorList>
    </citation>
    <scope>NUCLEOTIDE SEQUENCE [MRNA]</scope>
    <scope>FUNCTION</scope>
    <scope>TISSUE SPECIFICITY</scope>
    <source>
        <strain>BALB/cJ</strain>
        <tissue>Plasmacytoma</tissue>
    </source>
</reference>
<reference key="2">
    <citation type="journal article" date="1997" name="Genomics">
        <title>The human gene ZFP161 on 18p11.21-pter encodes a putative c-myc repressor and is homologous to murine Zfp161 (Chr 17) and Zfp161-rs1 (X Chr).</title>
        <authorList>
            <person name="Sobek-Klocke I."/>
            <person name="Disque-Kochem C."/>
            <person name="Ronsiek M."/>
            <person name="Klocke R."/>
            <person name="Jockusch H."/>
            <person name="Breuning A."/>
            <person name="Ponstingl H."/>
            <person name="Rojas K."/>
            <person name="Overhauser J."/>
            <person name="Eichenlaub-Ritter U."/>
        </authorList>
    </citation>
    <scope>NUCLEOTIDE SEQUENCE [MRNA]</scope>
    <source>
        <tissue>Brain</tissue>
        <tissue>Ovary</tissue>
    </source>
</reference>
<reference key="3">
    <citation type="journal article" date="2004" name="Genome Res.">
        <title>The status, quality, and expansion of the NIH full-length cDNA project: the Mammalian Gene Collection (MGC).</title>
        <authorList>
            <consortium name="The MGC Project Team"/>
        </authorList>
    </citation>
    <scope>NUCLEOTIDE SEQUENCE [LARGE SCALE MRNA]</scope>
    <source>
        <strain>C57BL/6J</strain>
        <tissue>Brain</tissue>
    </source>
</reference>
<protein>
    <recommendedName>
        <fullName>Zinc finger and BTB domain-containing protein 14</fullName>
    </recommendedName>
    <alternativeName>
        <fullName>Zinc finger protein 161</fullName>
        <shortName>Zfp-161</shortName>
    </alternativeName>
    <alternativeName>
        <fullName>Zinc finger protein 5</fullName>
        <shortName>ZF5</shortName>
    </alternativeName>
</protein>